<proteinExistence type="evidence at protein level"/>
<protein>
    <recommendedName>
        <fullName evidence="8">Probable peptidoglycan-N-acetylglucosamine deacetylase ARB_03699</fullName>
        <shortName evidence="1">Peptidoglycan GlcNAc deacetylase</shortName>
        <ecNumber evidence="1">3.5.1.104</ecNumber>
    </recommendedName>
    <alternativeName>
        <fullName evidence="1">Peptidoglycan N-deacetylase</fullName>
        <shortName evidence="1">PG N-deacetylase</shortName>
    </alternativeName>
</protein>
<evidence type="ECO:0000250" key="1">
    <source>
        <dbReference type="UniProtKB" id="Q8DP63"/>
    </source>
</evidence>
<evidence type="ECO:0000255" key="2"/>
<evidence type="ECO:0000255" key="3">
    <source>
        <dbReference type="PROSITE-ProRule" id="PRU00498"/>
    </source>
</evidence>
<evidence type="ECO:0000255" key="4">
    <source>
        <dbReference type="PROSITE-ProRule" id="PRU01014"/>
    </source>
</evidence>
<evidence type="ECO:0000255" key="5">
    <source>
        <dbReference type="PROSITE-ProRule" id="PRU01118"/>
    </source>
</evidence>
<evidence type="ECO:0000256" key="6">
    <source>
        <dbReference type="SAM" id="MobiDB-lite"/>
    </source>
</evidence>
<evidence type="ECO:0000269" key="7">
    <source>
    </source>
</evidence>
<evidence type="ECO:0000305" key="8"/>
<feature type="signal peptide" evidence="2">
    <location>
        <begin position="1"/>
        <end position="20"/>
    </location>
</feature>
<feature type="chain" id="PRO_5003054702" description="Probable peptidoglycan-N-acetylglucosamine deacetylase ARB_03699">
    <location>
        <begin position="21"/>
        <end position="437"/>
    </location>
</feature>
<feature type="domain" description="NodB homology" evidence="4">
    <location>
        <begin position="149"/>
        <end position="334"/>
    </location>
</feature>
<feature type="domain" description="LysM" evidence="5">
    <location>
        <begin position="389"/>
        <end position="435"/>
    </location>
</feature>
<feature type="region of interest" description="Disordered" evidence="6">
    <location>
        <begin position="47"/>
        <end position="132"/>
    </location>
</feature>
<feature type="region of interest" description="Disordered" evidence="6">
    <location>
        <begin position="350"/>
        <end position="384"/>
    </location>
</feature>
<feature type="compositionally biased region" description="Low complexity" evidence="6">
    <location>
        <begin position="350"/>
        <end position="370"/>
    </location>
</feature>
<feature type="active site" description="Proton acceptor" evidence="1">
    <location>
        <position position="156"/>
    </location>
</feature>
<feature type="active site" description="Proton donor" evidence="1">
    <location>
        <position position="308"/>
    </location>
</feature>
<feature type="binding site" evidence="1">
    <location>
        <position position="157"/>
    </location>
    <ligand>
        <name>Zn(2+)</name>
        <dbReference type="ChEBI" id="CHEBI:29105"/>
    </ligand>
</feature>
<feature type="binding site" evidence="1">
    <location>
        <position position="209"/>
    </location>
    <ligand>
        <name>Zn(2+)</name>
        <dbReference type="ChEBI" id="CHEBI:29105"/>
    </ligand>
</feature>
<feature type="binding site" evidence="1">
    <location>
        <position position="213"/>
    </location>
    <ligand>
        <name>Zn(2+)</name>
        <dbReference type="ChEBI" id="CHEBI:29105"/>
    </ligand>
</feature>
<feature type="binding site" evidence="1">
    <location>
        <position position="251"/>
    </location>
    <ligand>
        <name>substrate</name>
    </ligand>
</feature>
<feature type="site" description="Raises pKa of active site His" evidence="1">
    <location>
        <position position="278"/>
    </location>
</feature>
<feature type="glycosylation site" description="N-linked (GlcNAc...) asparagine" evidence="3">
    <location>
        <position position="99"/>
    </location>
</feature>
<keyword id="KW-0119">Carbohydrate metabolism</keyword>
<keyword id="KW-0170">Cobalt</keyword>
<keyword id="KW-0325">Glycoprotein</keyword>
<keyword id="KW-0378">Hydrolase</keyword>
<keyword id="KW-0479">Metal-binding</keyword>
<keyword id="KW-1185">Reference proteome</keyword>
<keyword id="KW-0964">Secreted</keyword>
<keyword id="KW-0732">Signal</keyword>
<keyword id="KW-0862">Zinc</keyword>
<gene>
    <name type="ORF">ARB_03699</name>
</gene>
<accession>D4B5F9</accession>
<name>PGDA_ARTBC</name>
<dbReference type="EC" id="3.5.1.104" evidence="1"/>
<dbReference type="EMBL" id="ABSU01000040">
    <property type="protein sequence ID" value="EFE29445.1"/>
    <property type="status" value="ALT_SEQ"/>
    <property type="molecule type" value="Genomic_DNA"/>
</dbReference>
<dbReference type="RefSeq" id="XP_003010085.1">
    <property type="nucleotide sequence ID" value="XM_003010039.1"/>
</dbReference>
<dbReference type="SMR" id="D4B5F9"/>
<dbReference type="STRING" id="663331.D4B5F9"/>
<dbReference type="GeneID" id="9525681"/>
<dbReference type="KEGG" id="abe:ARB_03699"/>
<dbReference type="eggNOG" id="ENOG502QRIP">
    <property type="taxonomic scope" value="Eukaryota"/>
</dbReference>
<dbReference type="HOGENOM" id="CLU_050708_0_0_1"/>
<dbReference type="OrthoDB" id="2125469at2759"/>
<dbReference type="Proteomes" id="UP000008866">
    <property type="component" value="Unassembled WGS sequence"/>
</dbReference>
<dbReference type="GO" id="GO:0005576">
    <property type="term" value="C:extracellular region"/>
    <property type="evidence" value="ECO:0007669"/>
    <property type="project" value="UniProtKB-SubCell"/>
</dbReference>
<dbReference type="GO" id="GO:0016810">
    <property type="term" value="F:hydrolase activity, acting on carbon-nitrogen (but not peptide) bonds"/>
    <property type="evidence" value="ECO:0007669"/>
    <property type="project" value="InterPro"/>
</dbReference>
<dbReference type="GO" id="GO:0046872">
    <property type="term" value="F:metal ion binding"/>
    <property type="evidence" value="ECO:0007669"/>
    <property type="project" value="UniProtKB-KW"/>
</dbReference>
<dbReference type="GO" id="GO:0005975">
    <property type="term" value="P:carbohydrate metabolic process"/>
    <property type="evidence" value="ECO:0007669"/>
    <property type="project" value="InterPro"/>
</dbReference>
<dbReference type="CDD" id="cd10951">
    <property type="entry name" value="CE4_ClCDA_like"/>
    <property type="match status" value="1"/>
</dbReference>
<dbReference type="CDD" id="cd00118">
    <property type="entry name" value="LysM"/>
    <property type="match status" value="1"/>
</dbReference>
<dbReference type="Gene3D" id="3.20.20.370">
    <property type="entry name" value="Glycoside hydrolase/deacetylase"/>
    <property type="match status" value="1"/>
</dbReference>
<dbReference type="Gene3D" id="3.10.350.10">
    <property type="entry name" value="LysM domain"/>
    <property type="match status" value="1"/>
</dbReference>
<dbReference type="InterPro" id="IPR011330">
    <property type="entry name" value="Glyco_hydro/deAcase_b/a-brl"/>
</dbReference>
<dbReference type="InterPro" id="IPR018392">
    <property type="entry name" value="LysM_dom"/>
</dbReference>
<dbReference type="InterPro" id="IPR036779">
    <property type="entry name" value="LysM_dom_sf"/>
</dbReference>
<dbReference type="InterPro" id="IPR002509">
    <property type="entry name" value="NODB_dom"/>
</dbReference>
<dbReference type="PANTHER" id="PTHR46471">
    <property type="entry name" value="CHITIN DEACETYLASE"/>
    <property type="match status" value="1"/>
</dbReference>
<dbReference type="PANTHER" id="PTHR46471:SF2">
    <property type="entry name" value="CHITIN DEACETYLASE-RELATED"/>
    <property type="match status" value="1"/>
</dbReference>
<dbReference type="Pfam" id="PF01476">
    <property type="entry name" value="LysM"/>
    <property type="match status" value="1"/>
</dbReference>
<dbReference type="Pfam" id="PF01522">
    <property type="entry name" value="Polysacc_deac_1"/>
    <property type="match status" value="1"/>
</dbReference>
<dbReference type="SMART" id="SM00257">
    <property type="entry name" value="LysM"/>
    <property type="match status" value="1"/>
</dbReference>
<dbReference type="SUPFAM" id="SSF88713">
    <property type="entry name" value="Glycoside hydrolase/deacetylase"/>
    <property type="match status" value="1"/>
</dbReference>
<dbReference type="SUPFAM" id="SSF54106">
    <property type="entry name" value="LysM domain"/>
    <property type="match status" value="1"/>
</dbReference>
<dbReference type="PROSITE" id="PS51782">
    <property type="entry name" value="LYSM"/>
    <property type="match status" value="1"/>
</dbReference>
<dbReference type="PROSITE" id="PS51677">
    <property type="entry name" value="NODB"/>
    <property type="match status" value="1"/>
</dbReference>
<comment type="function">
    <text evidence="1">Catalyzes the deacetylation of N-acetylglucosamine (GlcNAc) residues in peptidoglycan.</text>
</comment>
<comment type="catalytic activity">
    <reaction evidence="1">
        <text>peptidoglycan-N-acetyl-D-glucosamine + H2O = peptidoglycan-D-glucosamine + acetate.</text>
        <dbReference type="EC" id="3.5.1.104"/>
    </reaction>
</comment>
<comment type="cofactor">
    <cofactor evidence="1">
        <name>Zn(2+)</name>
        <dbReference type="ChEBI" id="CHEBI:29105"/>
    </cofactor>
    <cofactor evidence="1">
        <name>Co(2+)</name>
        <dbReference type="ChEBI" id="CHEBI:48828"/>
    </cofactor>
</comment>
<comment type="subcellular location">
    <subcellularLocation>
        <location evidence="7">Secreted</location>
    </subcellularLocation>
</comment>
<comment type="sequence caution" evidence="8">
    <conflict type="erroneous gene model prediction">
        <sequence resource="EMBL-CDS" id="EFE29445"/>
    </conflict>
</comment>
<organism>
    <name type="scientific">Arthroderma benhamiae (strain ATCC MYA-4681 / CBS 112371)</name>
    <name type="common">Trichophyton mentagrophytes</name>
    <dbReference type="NCBI Taxonomy" id="663331"/>
    <lineage>
        <taxon>Eukaryota</taxon>
        <taxon>Fungi</taxon>
        <taxon>Dikarya</taxon>
        <taxon>Ascomycota</taxon>
        <taxon>Pezizomycotina</taxon>
        <taxon>Eurotiomycetes</taxon>
        <taxon>Eurotiomycetidae</taxon>
        <taxon>Onygenales</taxon>
        <taxon>Arthrodermataceae</taxon>
        <taxon>Trichophyton</taxon>
    </lineage>
</organism>
<sequence>MLMRLYTFFAAALLACCAAAGPLHPELPQLVGKSWIPDWWFPFPRPSTRAATTTTTPATSTTGLATTTTKPTTTSSKPVTPTPQPATSTAQPAISSTANATATATASSASTSTTSSSTSASTSTSAAAPSTPTTVVPFGQVIRSCTVKGTVAITFDDGPYDYTNKLLDIFDANGAKATLFVNAQNFGSITDYSSVMLRAFNTGHQIASHTYDHADLSTLNGAGIISEMTKLDDVLATITNGYRPTYMRVPYFAYSPLVLQTMADLKYHVIEADIDTKDYEHDTPDGVSVSVGFFRDGLNAGGSIALAHDVHQTTVDLLIQQLLDEVKRRGLKAVTVGECLGDPRANWYRTTPVQVPTGTSTTSPTATPTSPGTPPPAPTQPGVASNCQKWHTVVSGDTCYDIAAANGISLDNLYKWNPAVGTSCASLWLGYAVCVGV</sequence>
<reference key="1">
    <citation type="journal article" date="2011" name="Genome Biol.">
        <title>Comparative and functional genomics provide insights into the pathogenicity of dermatophytic fungi.</title>
        <authorList>
            <person name="Burmester A."/>
            <person name="Shelest E."/>
            <person name="Gloeckner G."/>
            <person name="Heddergott C."/>
            <person name="Schindler S."/>
            <person name="Staib P."/>
            <person name="Heidel A."/>
            <person name="Felder M."/>
            <person name="Petzold A."/>
            <person name="Szafranski K."/>
            <person name="Feuermann M."/>
            <person name="Pedruzzi I."/>
            <person name="Priebe S."/>
            <person name="Groth M."/>
            <person name="Winkler R."/>
            <person name="Li W."/>
            <person name="Kniemeyer O."/>
            <person name="Schroeckh V."/>
            <person name="Hertweck C."/>
            <person name="Hube B."/>
            <person name="White T.C."/>
            <person name="Platzer M."/>
            <person name="Guthke R."/>
            <person name="Heitman J."/>
            <person name="Woestemeyer J."/>
            <person name="Zipfel P.F."/>
            <person name="Monod M."/>
            <person name="Brakhage A.A."/>
        </authorList>
    </citation>
    <scope>NUCLEOTIDE SEQUENCE [LARGE SCALE GENOMIC DNA]</scope>
    <source>
        <strain>ATCC MYA-4681 / CBS 112371</strain>
    </source>
</reference>
<reference key="2">
    <citation type="journal article" date="2011" name="Proteomics">
        <title>Identification of novel secreted proteases during extracellular proteolysis by dermatophytes at acidic pH.</title>
        <authorList>
            <person name="Sriranganadane D."/>
            <person name="Waridel P."/>
            <person name="Salamin K."/>
            <person name="Feuermann M."/>
            <person name="Mignon B."/>
            <person name="Staib P."/>
            <person name="Neuhaus J.M."/>
            <person name="Quadroni M."/>
            <person name="Monod M."/>
        </authorList>
    </citation>
    <scope>IDENTIFICATION BY MASS SPECTROMETRY</scope>
    <scope>SUBCELLULAR LOCATION</scope>
</reference>